<sequence>KLQLPTLDDPVPIGIAPAIT</sequence>
<protein>
    <recommendedName>
        <fullName>Unknown protein NF007 from 2D-PAGE</fullName>
    </recommendedName>
</protein>
<reference key="1">
    <citation type="submission" date="2003-12" db="UniProtKB">
        <title>Comparative study of protein profiles on pathogenic and nonpathogenic Naegleria species by 2D-PAGE.</title>
        <authorList>
            <person name="Omura M."/>
            <person name="Furushima-Shimogawara R."/>
            <person name="Izumiyama S."/>
            <person name="Endo T."/>
        </authorList>
    </citation>
    <scope>PROTEIN SEQUENCE</scope>
    <source>
        <strain evidence="1">ATCC 30214 / Nf 66</strain>
    </source>
</reference>
<comment type="miscellaneous">
    <text>On the 2D-gel the determined pI of this unknown protein is: 6.7, its MW is: 23.0 kDa.</text>
</comment>
<feature type="chain" id="PRO_0000055488" description="Unknown protein NF007 from 2D-PAGE">
    <location>
        <begin position="1"/>
        <end position="20" status="greater than"/>
    </location>
</feature>
<feature type="non-terminal residue" evidence="1">
    <location>
        <position position="20"/>
    </location>
</feature>
<accession>P83737</accession>
<organism evidence="1">
    <name type="scientific">Naegleria fowleri</name>
    <name type="common">Brain eating amoeba</name>
    <dbReference type="NCBI Taxonomy" id="5763"/>
    <lineage>
        <taxon>Eukaryota</taxon>
        <taxon>Discoba</taxon>
        <taxon>Heterolobosea</taxon>
        <taxon>Tetramitia</taxon>
        <taxon>Eutetramitia</taxon>
        <taxon>Vahlkampfiidae</taxon>
        <taxon>Naegleria</taxon>
    </lineage>
</organism>
<name>NF07_NAEFO</name>
<proteinExistence type="evidence at protein level"/>
<evidence type="ECO:0000305" key="1"/>
<keyword id="KW-0903">Direct protein sequencing</keyword>